<organism>
    <name type="scientific">Branta canadensis</name>
    <name type="common">Canada goose</name>
    <name type="synonym">Anas canadensis</name>
    <dbReference type="NCBI Taxonomy" id="8853"/>
    <lineage>
        <taxon>Eukaryota</taxon>
        <taxon>Metazoa</taxon>
        <taxon>Chordata</taxon>
        <taxon>Craniata</taxon>
        <taxon>Vertebrata</taxon>
        <taxon>Euteleostomi</taxon>
        <taxon>Archelosauria</taxon>
        <taxon>Archosauria</taxon>
        <taxon>Dinosauria</taxon>
        <taxon>Saurischia</taxon>
        <taxon>Theropoda</taxon>
        <taxon>Coelurosauria</taxon>
        <taxon>Aves</taxon>
        <taxon>Neognathae</taxon>
        <taxon>Galloanserae</taxon>
        <taxon>Anseriformes</taxon>
        <taxon>Anatidae</taxon>
        <taxon>Anserinae</taxon>
        <taxon>Branta</taxon>
    </lineage>
</organism>
<keyword id="KW-0903">Direct protein sequencing</keyword>
<keyword id="KW-0349">Heme</keyword>
<keyword id="KW-0408">Iron</keyword>
<keyword id="KW-0479">Metal-binding</keyword>
<keyword id="KW-0561">Oxygen transport</keyword>
<keyword id="KW-0813">Transport</keyword>
<gene>
    <name type="primary">HBAA</name>
</gene>
<evidence type="ECO:0000255" key="1">
    <source>
        <dbReference type="PROSITE-ProRule" id="PRU00238"/>
    </source>
</evidence>
<proteinExistence type="evidence at protein level"/>
<protein>
    <recommendedName>
        <fullName>Hemoglobin subunit alpha-A</fullName>
    </recommendedName>
    <alternativeName>
        <fullName>Alpha-A-globin</fullName>
    </alternativeName>
    <alternativeName>
        <fullName>Hemoglobin alpha-A chain</fullName>
    </alternativeName>
</protein>
<name>HBA_BRACA</name>
<comment type="function">
    <text>Involved in oxygen transport from the lung to the various peripheral tissues.</text>
</comment>
<comment type="subunit">
    <text>Heterotetramer of two alpha chains and two beta chains.</text>
</comment>
<comment type="tissue specificity">
    <text>Red blood cells.</text>
</comment>
<comment type="similarity">
    <text evidence="1">Belongs to the globin family.</text>
</comment>
<accession>P01991</accession>
<dbReference type="PIR" id="A02312">
    <property type="entry name" value="HAGSC"/>
</dbReference>
<dbReference type="SMR" id="P01991"/>
<dbReference type="GO" id="GO:0072562">
    <property type="term" value="C:blood microparticle"/>
    <property type="evidence" value="ECO:0007669"/>
    <property type="project" value="TreeGrafter"/>
</dbReference>
<dbReference type="GO" id="GO:0031838">
    <property type="term" value="C:haptoglobin-hemoglobin complex"/>
    <property type="evidence" value="ECO:0007669"/>
    <property type="project" value="TreeGrafter"/>
</dbReference>
<dbReference type="GO" id="GO:0005833">
    <property type="term" value="C:hemoglobin complex"/>
    <property type="evidence" value="ECO:0007669"/>
    <property type="project" value="InterPro"/>
</dbReference>
<dbReference type="GO" id="GO:0031720">
    <property type="term" value="F:haptoglobin binding"/>
    <property type="evidence" value="ECO:0007669"/>
    <property type="project" value="TreeGrafter"/>
</dbReference>
<dbReference type="GO" id="GO:0020037">
    <property type="term" value="F:heme binding"/>
    <property type="evidence" value="ECO:0007669"/>
    <property type="project" value="InterPro"/>
</dbReference>
<dbReference type="GO" id="GO:0005506">
    <property type="term" value="F:iron ion binding"/>
    <property type="evidence" value="ECO:0007669"/>
    <property type="project" value="InterPro"/>
</dbReference>
<dbReference type="GO" id="GO:0043177">
    <property type="term" value="F:organic acid binding"/>
    <property type="evidence" value="ECO:0007669"/>
    <property type="project" value="TreeGrafter"/>
</dbReference>
<dbReference type="GO" id="GO:0019825">
    <property type="term" value="F:oxygen binding"/>
    <property type="evidence" value="ECO:0007669"/>
    <property type="project" value="InterPro"/>
</dbReference>
<dbReference type="GO" id="GO:0005344">
    <property type="term" value="F:oxygen carrier activity"/>
    <property type="evidence" value="ECO:0007669"/>
    <property type="project" value="UniProtKB-KW"/>
</dbReference>
<dbReference type="GO" id="GO:0004601">
    <property type="term" value="F:peroxidase activity"/>
    <property type="evidence" value="ECO:0007669"/>
    <property type="project" value="TreeGrafter"/>
</dbReference>
<dbReference type="GO" id="GO:0042744">
    <property type="term" value="P:hydrogen peroxide catabolic process"/>
    <property type="evidence" value="ECO:0007669"/>
    <property type="project" value="TreeGrafter"/>
</dbReference>
<dbReference type="CDD" id="cd08927">
    <property type="entry name" value="Hb-alpha-like"/>
    <property type="match status" value="1"/>
</dbReference>
<dbReference type="FunFam" id="1.10.490.10:FF:000002">
    <property type="entry name" value="Hemoglobin subunit alpha"/>
    <property type="match status" value="1"/>
</dbReference>
<dbReference type="Gene3D" id="1.10.490.10">
    <property type="entry name" value="Globins"/>
    <property type="match status" value="1"/>
</dbReference>
<dbReference type="InterPro" id="IPR000971">
    <property type="entry name" value="Globin"/>
</dbReference>
<dbReference type="InterPro" id="IPR009050">
    <property type="entry name" value="Globin-like_sf"/>
</dbReference>
<dbReference type="InterPro" id="IPR012292">
    <property type="entry name" value="Globin/Proto"/>
</dbReference>
<dbReference type="InterPro" id="IPR002338">
    <property type="entry name" value="Hemoglobin_a-typ"/>
</dbReference>
<dbReference type="InterPro" id="IPR050056">
    <property type="entry name" value="Hemoglobin_oxygen_transport"/>
</dbReference>
<dbReference type="InterPro" id="IPR002339">
    <property type="entry name" value="Hemoglobin_pi"/>
</dbReference>
<dbReference type="PANTHER" id="PTHR11442">
    <property type="entry name" value="HEMOGLOBIN FAMILY MEMBER"/>
    <property type="match status" value="1"/>
</dbReference>
<dbReference type="PANTHER" id="PTHR11442:SF48">
    <property type="entry name" value="HEMOGLOBIN SUBUNIT ALPHA"/>
    <property type="match status" value="1"/>
</dbReference>
<dbReference type="Pfam" id="PF00042">
    <property type="entry name" value="Globin"/>
    <property type="match status" value="1"/>
</dbReference>
<dbReference type="PRINTS" id="PR00612">
    <property type="entry name" value="ALPHAHAEM"/>
</dbReference>
<dbReference type="PRINTS" id="PR00815">
    <property type="entry name" value="PIHAEM"/>
</dbReference>
<dbReference type="SUPFAM" id="SSF46458">
    <property type="entry name" value="Globin-like"/>
    <property type="match status" value="1"/>
</dbReference>
<dbReference type="PROSITE" id="PS01033">
    <property type="entry name" value="GLOBIN"/>
    <property type="match status" value="1"/>
</dbReference>
<reference key="1">
    <citation type="journal article" date="1982" name="Hoppe-Seyler's Z. Physiol. Chem.">
        <title>The amino acid sequence of Canada goose (Branta canadensis) and mute swan (Cygnus olor) hemoglobins. Two different species with identical beta-chains.</title>
        <authorList>
            <person name="Oberthur W."/>
            <person name="Godovac-Zimmermann J."/>
            <person name="Braunitzer G."/>
        </authorList>
    </citation>
    <scope>PROTEIN SEQUENCE</scope>
</reference>
<sequence length="141" mass="15289">VLSAADKTNVKGVFSKIGGHADEYGAETLERMFVAYPQTKTYFPHFDLQHGSAQIKAHGKKVAAALVEAVNHIDDIAGALSKLSDLHAQKLRVDPVNFKFLGHCFLVVVAIHHPSALTPEVHASLDKFLCAVGTVLTAKYR</sequence>
<feature type="chain" id="PRO_0000052569" description="Hemoglobin subunit alpha-A">
    <location>
        <begin position="1"/>
        <end position="141"/>
    </location>
</feature>
<feature type="domain" description="Globin" evidence="1">
    <location>
        <begin position="1"/>
        <end position="141"/>
    </location>
</feature>
<feature type="binding site" evidence="1">
    <location>
        <position position="58"/>
    </location>
    <ligand>
        <name>O2</name>
        <dbReference type="ChEBI" id="CHEBI:15379"/>
    </ligand>
</feature>
<feature type="binding site" description="proximal binding residue" evidence="1">
    <location>
        <position position="87"/>
    </location>
    <ligand>
        <name>heme b</name>
        <dbReference type="ChEBI" id="CHEBI:60344"/>
    </ligand>
    <ligandPart>
        <name>Fe</name>
        <dbReference type="ChEBI" id="CHEBI:18248"/>
    </ligandPart>
</feature>